<feature type="chain" id="PRO_0000354855" description="Catalase-peroxidase">
    <location>
        <begin position="1"/>
        <end position="739"/>
    </location>
</feature>
<feature type="active site" description="Proton acceptor" evidence="1">
    <location>
        <position position="100"/>
    </location>
</feature>
<feature type="binding site" description="axial binding residue" evidence="1">
    <location>
        <position position="268"/>
    </location>
    <ligand>
        <name>heme b</name>
        <dbReference type="ChEBI" id="CHEBI:60344"/>
    </ligand>
    <ligandPart>
        <name>Fe</name>
        <dbReference type="ChEBI" id="CHEBI:18248"/>
    </ligandPart>
</feature>
<feature type="site" description="Transition state stabilizer" evidence="1">
    <location>
        <position position="96"/>
    </location>
</feature>
<feature type="cross-link" description="Tryptophyl-tyrosyl-methioninium (Trp-Tyr) (with M-253)" evidence="1">
    <location>
        <begin position="99"/>
        <end position="227"/>
    </location>
</feature>
<feature type="cross-link" description="Tryptophyl-tyrosyl-methioninium (Tyr-Met) (with W-99)" evidence="1">
    <location>
        <begin position="227"/>
        <end position="253"/>
    </location>
</feature>
<evidence type="ECO:0000255" key="1">
    <source>
        <dbReference type="HAMAP-Rule" id="MF_01961"/>
    </source>
</evidence>
<proteinExistence type="inferred from homology"/>
<sequence>MSEDSKCPVTGKTAKTAIPMTGRGTTNQDWWPNQLKLNILHQHSSKSNPMGGDFNYAEEFKKLDLAAVKQDLYAMMTDSREWWPADWGHYGGLLIRMAWHSAGTYRMGDGRGGAGSGSQRLAPLNSWPDNVNLDKARRLLWPIKQKYGRKISWADLMVLAGNCALESMGFKTFGFAGGREDAWEPEQDIYWGAEEEWLATSDKPKSRYSGDRDLENPLAAVQMGLIYVNPEGPDGNPDPVASGRDVRETFARMAMNDEETVALVAGGHTFGKCHGAGPATHVGPEPEAAPIEEQGLGWKSSFGSGKGGDTISSGIEGAWKPNPTKWDMGYLKVLFKYEWEKVKSPAGAWQWLAKDVDEEDMIVGAHDPSKKFRPMMTTADLSLRFDPIYEPIARRYLENPEEFADAFARAWFKLTHRDMGPRSRYLGSEVPAEELIWQDPVPAVDHELIDAADIADLKVKILASGLSIPQLVSTAWASASTFRGSDKRGGANGARIRLAPQKDWEVNQPAQLKTVLQTLEGIQQAFNGAQAGGKKVSLADLIVLGGCAAVEQAAGNAGHDVTVPFTPGRTDATSEQTDVASFSVLEPVADGFRNYQKAKFAVRAEELLVDRAQLLTLTAPEMTVLVGGMRVLNTNHGGTPHGVFTDRPETLTNDFFVNLLDMGTTWQPTAEDADIFEGCDRATGELKWTGTRIDLVFGSNSQLRAIAEVYGCADSGEKFVNDFVAVWSKIMNLDRFDLA</sequence>
<accession>Q3A5D3</accession>
<gene>
    <name evidence="1" type="primary">katG</name>
    <name type="ordered locus">Pcar_1175</name>
</gene>
<comment type="function">
    <text evidence="1">Bifunctional enzyme with both catalase and broad-spectrum peroxidase activity.</text>
</comment>
<comment type="catalytic activity">
    <reaction evidence="1">
        <text>H2O2 + AH2 = A + 2 H2O</text>
        <dbReference type="Rhea" id="RHEA:30275"/>
        <dbReference type="ChEBI" id="CHEBI:13193"/>
        <dbReference type="ChEBI" id="CHEBI:15377"/>
        <dbReference type="ChEBI" id="CHEBI:16240"/>
        <dbReference type="ChEBI" id="CHEBI:17499"/>
        <dbReference type="EC" id="1.11.1.21"/>
    </reaction>
</comment>
<comment type="catalytic activity">
    <reaction evidence="1">
        <text>2 H2O2 = O2 + 2 H2O</text>
        <dbReference type="Rhea" id="RHEA:20309"/>
        <dbReference type="ChEBI" id="CHEBI:15377"/>
        <dbReference type="ChEBI" id="CHEBI:15379"/>
        <dbReference type="ChEBI" id="CHEBI:16240"/>
        <dbReference type="EC" id="1.11.1.21"/>
    </reaction>
</comment>
<comment type="cofactor">
    <cofactor evidence="1">
        <name>heme b</name>
        <dbReference type="ChEBI" id="CHEBI:60344"/>
    </cofactor>
    <text evidence="1">Binds 1 heme b (iron(II)-protoporphyrin IX) group per dimer.</text>
</comment>
<comment type="subunit">
    <text evidence="1">Homodimer or homotetramer.</text>
</comment>
<comment type="PTM">
    <text evidence="1">Formation of the three residue Trp-Tyr-Met cross-link is important for the catalase, but not the peroxidase activity of the enzyme.</text>
</comment>
<comment type="similarity">
    <text evidence="1">Belongs to the peroxidase family. Peroxidase/catalase subfamily.</text>
</comment>
<name>KATG_SYNC1</name>
<keyword id="KW-0349">Heme</keyword>
<keyword id="KW-0376">Hydrogen peroxide</keyword>
<keyword id="KW-0408">Iron</keyword>
<keyword id="KW-0479">Metal-binding</keyword>
<keyword id="KW-0560">Oxidoreductase</keyword>
<keyword id="KW-0575">Peroxidase</keyword>
<keyword id="KW-1185">Reference proteome</keyword>
<reference key="1">
    <citation type="submission" date="2005-10" db="EMBL/GenBank/DDBJ databases">
        <title>Complete sequence of Pelobacter carbinolicus DSM 2380.</title>
        <authorList>
            <person name="Copeland A."/>
            <person name="Lucas S."/>
            <person name="Lapidus A."/>
            <person name="Barry K."/>
            <person name="Detter J.C."/>
            <person name="Glavina T."/>
            <person name="Hammon N."/>
            <person name="Israni S."/>
            <person name="Pitluck S."/>
            <person name="Chertkov O."/>
            <person name="Schmutz J."/>
            <person name="Larimer F."/>
            <person name="Land M."/>
            <person name="Kyrpides N."/>
            <person name="Ivanova N."/>
            <person name="Richardson P."/>
        </authorList>
    </citation>
    <scope>NUCLEOTIDE SEQUENCE [LARGE SCALE GENOMIC DNA]</scope>
    <source>
        <strain>DSM 2380 / NBRC 103641 / GraBd1</strain>
    </source>
</reference>
<protein>
    <recommendedName>
        <fullName evidence="1">Catalase-peroxidase</fullName>
        <shortName evidence="1">CP</shortName>
        <ecNumber evidence="1">1.11.1.21</ecNumber>
    </recommendedName>
    <alternativeName>
        <fullName evidence="1">Peroxidase/catalase</fullName>
    </alternativeName>
</protein>
<dbReference type="EC" id="1.11.1.21" evidence="1"/>
<dbReference type="EMBL" id="CP000142">
    <property type="protein sequence ID" value="ABA88424.1"/>
    <property type="molecule type" value="Genomic_DNA"/>
</dbReference>
<dbReference type="RefSeq" id="WP_011340898.1">
    <property type="nucleotide sequence ID" value="NC_007498.2"/>
</dbReference>
<dbReference type="SMR" id="Q3A5D3"/>
<dbReference type="STRING" id="338963.Pcar_1175"/>
<dbReference type="PeroxiBase" id="2668">
    <property type="entry name" value="PcaCP01"/>
</dbReference>
<dbReference type="KEGG" id="pca:Pcar_1175"/>
<dbReference type="eggNOG" id="COG0376">
    <property type="taxonomic scope" value="Bacteria"/>
</dbReference>
<dbReference type="HOGENOM" id="CLU_025424_2_0_7"/>
<dbReference type="OrthoDB" id="9759743at2"/>
<dbReference type="Proteomes" id="UP000002534">
    <property type="component" value="Chromosome"/>
</dbReference>
<dbReference type="GO" id="GO:0005829">
    <property type="term" value="C:cytosol"/>
    <property type="evidence" value="ECO:0007669"/>
    <property type="project" value="TreeGrafter"/>
</dbReference>
<dbReference type="GO" id="GO:0004096">
    <property type="term" value="F:catalase activity"/>
    <property type="evidence" value="ECO:0007669"/>
    <property type="project" value="UniProtKB-UniRule"/>
</dbReference>
<dbReference type="GO" id="GO:0020037">
    <property type="term" value="F:heme binding"/>
    <property type="evidence" value="ECO:0007669"/>
    <property type="project" value="InterPro"/>
</dbReference>
<dbReference type="GO" id="GO:0046872">
    <property type="term" value="F:metal ion binding"/>
    <property type="evidence" value="ECO:0007669"/>
    <property type="project" value="UniProtKB-KW"/>
</dbReference>
<dbReference type="GO" id="GO:0070301">
    <property type="term" value="P:cellular response to hydrogen peroxide"/>
    <property type="evidence" value="ECO:0007669"/>
    <property type="project" value="TreeGrafter"/>
</dbReference>
<dbReference type="GO" id="GO:0042744">
    <property type="term" value="P:hydrogen peroxide catabolic process"/>
    <property type="evidence" value="ECO:0007669"/>
    <property type="project" value="UniProtKB-KW"/>
</dbReference>
<dbReference type="CDD" id="cd00649">
    <property type="entry name" value="catalase_peroxidase_1"/>
    <property type="match status" value="1"/>
</dbReference>
<dbReference type="CDD" id="cd08200">
    <property type="entry name" value="catalase_peroxidase_2"/>
    <property type="match status" value="1"/>
</dbReference>
<dbReference type="FunFam" id="1.10.420.10:FF:000002">
    <property type="entry name" value="Catalase-peroxidase"/>
    <property type="match status" value="1"/>
</dbReference>
<dbReference type="FunFam" id="1.10.420.10:FF:000004">
    <property type="entry name" value="Catalase-peroxidase"/>
    <property type="match status" value="1"/>
</dbReference>
<dbReference type="FunFam" id="1.10.520.10:FF:000002">
    <property type="entry name" value="Catalase-peroxidase"/>
    <property type="match status" value="1"/>
</dbReference>
<dbReference type="FunFam" id="1.10.520.10:FF:000004">
    <property type="entry name" value="Catalase-peroxidase"/>
    <property type="match status" value="1"/>
</dbReference>
<dbReference type="Gene3D" id="1.10.520.10">
    <property type="match status" value="2"/>
</dbReference>
<dbReference type="Gene3D" id="1.10.420.10">
    <property type="entry name" value="Peroxidase, domain 2"/>
    <property type="match status" value="2"/>
</dbReference>
<dbReference type="HAMAP" id="MF_01961">
    <property type="entry name" value="Catal_peroxid"/>
    <property type="match status" value="1"/>
</dbReference>
<dbReference type="InterPro" id="IPR000763">
    <property type="entry name" value="Catalase_peroxidase"/>
</dbReference>
<dbReference type="InterPro" id="IPR002016">
    <property type="entry name" value="Haem_peroxidase"/>
</dbReference>
<dbReference type="InterPro" id="IPR010255">
    <property type="entry name" value="Haem_peroxidase_sf"/>
</dbReference>
<dbReference type="InterPro" id="IPR019794">
    <property type="entry name" value="Peroxidases_AS"/>
</dbReference>
<dbReference type="InterPro" id="IPR019793">
    <property type="entry name" value="Peroxidases_heam-ligand_BS"/>
</dbReference>
<dbReference type="NCBIfam" id="TIGR00198">
    <property type="entry name" value="cat_per_HPI"/>
    <property type="match status" value="1"/>
</dbReference>
<dbReference type="NCBIfam" id="NF011635">
    <property type="entry name" value="PRK15061.1"/>
    <property type="match status" value="1"/>
</dbReference>
<dbReference type="PANTHER" id="PTHR30555:SF0">
    <property type="entry name" value="CATALASE-PEROXIDASE"/>
    <property type="match status" value="1"/>
</dbReference>
<dbReference type="PANTHER" id="PTHR30555">
    <property type="entry name" value="HYDROPEROXIDASE I, BIFUNCTIONAL CATALASE-PEROXIDASE"/>
    <property type="match status" value="1"/>
</dbReference>
<dbReference type="Pfam" id="PF00141">
    <property type="entry name" value="peroxidase"/>
    <property type="match status" value="2"/>
</dbReference>
<dbReference type="PRINTS" id="PR00460">
    <property type="entry name" value="BPEROXIDASE"/>
</dbReference>
<dbReference type="PRINTS" id="PR00458">
    <property type="entry name" value="PEROXIDASE"/>
</dbReference>
<dbReference type="SUPFAM" id="SSF48113">
    <property type="entry name" value="Heme-dependent peroxidases"/>
    <property type="match status" value="2"/>
</dbReference>
<dbReference type="PROSITE" id="PS00435">
    <property type="entry name" value="PEROXIDASE_1"/>
    <property type="match status" value="1"/>
</dbReference>
<dbReference type="PROSITE" id="PS00436">
    <property type="entry name" value="PEROXIDASE_2"/>
    <property type="match status" value="1"/>
</dbReference>
<dbReference type="PROSITE" id="PS50873">
    <property type="entry name" value="PEROXIDASE_4"/>
    <property type="match status" value="1"/>
</dbReference>
<organism>
    <name type="scientific">Syntrophotalea carbinolica (strain DSM 2380 / NBRC 103641 / GraBd1)</name>
    <name type="common">Pelobacter carbinolicus</name>
    <dbReference type="NCBI Taxonomy" id="338963"/>
    <lineage>
        <taxon>Bacteria</taxon>
        <taxon>Pseudomonadati</taxon>
        <taxon>Thermodesulfobacteriota</taxon>
        <taxon>Desulfuromonadia</taxon>
        <taxon>Desulfuromonadales</taxon>
        <taxon>Syntrophotaleaceae</taxon>
        <taxon>Syntrophotalea</taxon>
    </lineage>
</organism>